<comment type="function">
    <text evidence="1">An essential GTPase which binds GTP, GDP and possibly (p)ppGpp with moderate affinity, with high nucleotide exchange rates and a fairly low GTP hydrolysis rate. Plays a role in control of the cell cycle, stress response, ribosome biogenesis and in those bacteria that undergo differentiation, in morphogenesis control.</text>
</comment>
<comment type="cofactor">
    <cofactor evidence="1">
        <name>Mg(2+)</name>
        <dbReference type="ChEBI" id="CHEBI:18420"/>
    </cofactor>
</comment>
<comment type="subunit">
    <text evidence="1">Monomer.</text>
</comment>
<comment type="subcellular location">
    <subcellularLocation>
        <location evidence="1">Cytoplasm</location>
    </subcellularLocation>
</comment>
<comment type="similarity">
    <text evidence="1">Belongs to the TRAFAC class OBG-HflX-like GTPase superfamily. OBG GTPase family.</text>
</comment>
<dbReference type="EC" id="3.6.5.-" evidence="1"/>
<dbReference type="EMBL" id="CP000542">
    <property type="protein sequence ID" value="ABM59622.1"/>
    <property type="molecule type" value="Genomic_DNA"/>
</dbReference>
<dbReference type="RefSeq" id="WP_011811609.1">
    <property type="nucleotide sequence ID" value="NC_008786.1"/>
</dbReference>
<dbReference type="SMR" id="A1WPR5"/>
<dbReference type="STRING" id="391735.Veis_3915"/>
<dbReference type="GeneID" id="76462265"/>
<dbReference type="KEGG" id="vei:Veis_3915"/>
<dbReference type="eggNOG" id="COG0536">
    <property type="taxonomic scope" value="Bacteria"/>
</dbReference>
<dbReference type="HOGENOM" id="CLU_011747_2_0_4"/>
<dbReference type="OrthoDB" id="9807318at2"/>
<dbReference type="Proteomes" id="UP000000374">
    <property type="component" value="Chromosome"/>
</dbReference>
<dbReference type="GO" id="GO:0005737">
    <property type="term" value="C:cytoplasm"/>
    <property type="evidence" value="ECO:0007669"/>
    <property type="project" value="UniProtKB-SubCell"/>
</dbReference>
<dbReference type="GO" id="GO:0005525">
    <property type="term" value="F:GTP binding"/>
    <property type="evidence" value="ECO:0007669"/>
    <property type="project" value="UniProtKB-UniRule"/>
</dbReference>
<dbReference type="GO" id="GO:0003924">
    <property type="term" value="F:GTPase activity"/>
    <property type="evidence" value="ECO:0007669"/>
    <property type="project" value="UniProtKB-UniRule"/>
</dbReference>
<dbReference type="GO" id="GO:0000287">
    <property type="term" value="F:magnesium ion binding"/>
    <property type="evidence" value="ECO:0007669"/>
    <property type="project" value="InterPro"/>
</dbReference>
<dbReference type="GO" id="GO:0042254">
    <property type="term" value="P:ribosome biogenesis"/>
    <property type="evidence" value="ECO:0007669"/>
    <property type="project" value="UniProtKB-UniRule"/>
</dbReference>
<dbReference type="CDD" id="cd01898">
    <property type="entry name" value="Obg"/>
    <property type="match status" value="1"/>
</dbReference>
<dbReference type="FunFam" id="2.70.210.12:FF:000001">
    <property type="entry name" value="GTPase Obg"/>
    <property type="match status" value="1"/>
</dbReference>
<dbReference type="Gene3D" id="2.70.210.12">
    <property type="entry name" value="GTP1/OBG domain"/>
    <property type="match status" value="1"/>
</dbReference>
<dbReference type="Gene3D" id="3.40.50.300">
    <property type="entry name" value="P-loop containing nucleotide triphosphate hydrolases"/>
    <property type="match status" value="1"/>
</dbReference>
<dbReference type="HAMAP" id="MF_01454">
    <property type="entry name" value="GTPase_Obg"/>
    <property type="match status" value="1"/>
</dbReference>
<dbReference type="InterPro" id="IPR031167">
    <property type="entry name" value="G_OBG"/>
</dbReference>
<dbReference type="InterPro" id="IPR006073">
    <property type="entry name" value="GTP-bd"/>
</dbReference>
<dbReference type="InterPro" id="IPR014100">
    <property type="entry name" value="GTP-bd_Obg/CgtA"/>
</dbReference>
<dbReference type="InterPro" id="IPR006074">
    <property type="entry name" value="GTP1-OBG_CS"/>
</dbReference>
<dbReference type="InterPro" id="IPR006169">
    <property type="entry name" value="GTP1_OBG_dom"/>
</dbReference>
<dbReference type="InterPro" id="IPR036726">
    <property type="entry name" value="GTP1_OBG_dom_sf"/>
</dbReference>
<dbReference type="InterPro" id="IPR045086">
    <property type="entry name" value="OBG_GTPase"/>
</dbReference>
<dbReference type="InterPro" id="IPR027417">
    <property type="entry name" value="P-loop_NTPase"/>
</dbReference>
<dbReference type="NCBIfam" id="TIGR02729">
    <property type="entry name" value="Obg_CgtA"/>
    <property type="match status" value="1"/>
</dbReference>
<dbReference type="NCBIfam" id="NF008955">
    <property type="entry name" value="PRK12297.1"/>
    <property type="match status" value="1"/>
</dbReference>
<dbReference type="NCBIfam" id="NF008956">
    <property type="entry name" value="PRK12299.1"/>
    <property type="match status" value="1"/>
</dbReference>
<dbReference type="PANTHER" id="PTHR11702">
    <property type="entry name" value="DEVELOPMENTALLY REGULATED GTP-BINDING PROTEIN-RELATED"/>
    <property type="match status" value="1"/>
</dbReference>
<dbReference type="PANTHER" id="PTHR11702:SF31">
    <property type="entry name" value="MITOCHONDRIAL RIBOSOME-ASSOCIATED GTPASE 2"/>
    <property type="match status" value="1"/>
</dbReference>
<dbReference type="Pfam" id="PF01018">
    <property type="entry name" value="GTP1_OBG"/>
    <property type="match status" value="1"/>
</dbReference>
<dbReference type="Pfam" id="PF01926">
    <property type="entry name" value="MMR_HSR1"/>
    <property type="match status" value="1"/>
</dbReference>
<dbReference type="PIRSF" id="PIRSF002401">
    <property type="entry name" value="GTP_bd_Obg/CgtA"/>
    <property type="match status" value="1"/>
</dbReference>
<dbReference type="PRINTS" id="PR00326">
    <property type="entry name" value="GTP1OBG"/>
</dbReference>
<dbReference type="SUPFAM" id="SSF82051">
    <property type="entry name" value="Obg GTP-binding protein N-terminal domain"/>
    <property type="match status" value="1"/>
</dbReference>
<dbReference type="SUPFAM" id="SSF52540">
    <property type="entry name" value="P-loop containing nucleoside triphosphate hydrolases"/>
    <property type="match status" value="1"/>
</dbReference>
<dbReference type="PROSITE" id="PS51710">
    <property type="entry name" value="G_OBG"/>
    <property type="match status" value="1"/>
</dbReference>
<dbReference type="PROSITE" id="PS00905">
    <property type="entry name" value="GTP1_OBG"/>
    <property type="match status" value="1"/>
</dbReference>
<dbReference type="PROSITE" id="PS51883">
    <property type="entry name" value="OBG"/>
    <property type="match status" value="1"/>
</dbReference>
<proteinExistence type="inferred from homology"/>
<sequence length="363" mass="38889">MKFVDEAFIDVAAGDGGNGCVSFRHEKYKEFGGPNGGDGGRGGHVFAVADPNLNTLVDFRYARRHEAKRGGHGMGSDMFGAAGADITLKMPVGTIITDAATGQPLYELLLPGEVITIARGGDGGFGNMRFKSAINRAPRHKTPGWPGEKKSLKLELKVLADVGLLGRPNAGKSTFIAAVSNARPKIADYPFTTLHPHLGVVRVAPEQSFVVADIPGLIEGASEGAGLGLQFLRHLQRTRLLLHIVDLAALDTGVDAQDAGVDPVAQAKAIINELKKYDRQLYDKPRWLVLNKLDMVPAGERQARVQDFVKRLKHQGPVFEISALTHEGCGPLVHAIFGHVQSGQRMDNEPPPLDPRFASAGPA</sequence>
<feature type="chain" id="PRO_0000386375" description="GTPase Obg">
    <location>
        <begin position="1"/>
        <end position="363"/>
    </location>
</feature>
<feature type="domain" description="Obg" evidence="2">
    <location>
        <begin position="1"/>
        <end position="159"/>
    </location>
</feature>
<feature type="domain" description="OBG-type G" evidence="1">
    <location>
        <begin position="160"/>
        <end position="341"/>
    </location>
</feature>
<feature type="region of interest" description="Disordered" evidence="3">
    <location>
        <begin position="343"/>
        <end position="363"/>
    </location>
</feature>
<feature type="binding site" evidence="1">
    <location>
        <begin position="166"/>
        <end position="173"/>
    </location>
    <ligand>
        <name>GTP</name>
        <dbReference type="ChEBI" id="CHEBI:37565"/>
    </ligand>
</feature>
<feature type="binding site" evidence="1">
    <location>
        <position position="173"/>
    </location>
    <ligand>
        <name>Mg(2+)</name>
        <dbReference type="ChEBI" id="CHEBI:18420"/>
    </ligand>
</feature>
<feature type="binding site" evidence="1">
    <location>
        <begin position="191"/>
        <end position="195"/>
    </location>
    <ligand>
        <name>GTP</name>
        <dbReference type="ChEBI" id="CHEBI:37565"/>
    </ligand>
</feature>
<feature type="binding site" evidence="1">
    <location>
        <position position="193"/>
    </location>
    <ligand>
        <name>Mg(2+)</name>
        <dbReference type="ChEBI" id="CHEBI:18420"/>
    </ligand>
</feature>
<feature type="binding site" evidence="1">
    <location>
        <begin position="213"/>
        <end position="216"/>
    </location>
    <ligand>
        <name>GTP</name>
        <dbReference type="ChEBI" id="CHEBI:37565"/>
    </ligand>
</feature>
<feature type="binding site" evidence="1">
    <location>
        <begin position="291"/>
        <end position="294"/>
    </location>
    <ligand>
        <name>GTP</name>
        <dbReference type="ChEBI" id="CHEBI:37565"/>
    </ligand>
</feature>
<feature type="binding site" evidence="1">
    <location>
        <begin position="322"/>
        <end position="324"/>
    </location>
    <ligand>
        <name>GTP</name>
        <dbReference type="ChEBI" id="CHEBI:37565"/>
    </ligand>
</feature>
<reference key="1">
    <citation type="submission" date="2006-12" db="EMBL/GenBank/DDBJ databases">
        <title>Complete sequence of chromosome 1 of Verminephrobacter eiseniae EF01-2.</title>
        <authorList>
            <person name="Copeland A."/>
            <person name="Lucas S."/>
            <person name="Lapidus A."/>
            <person name="Barry K."/>
            <person name="Detter J.C."/>
            <person name="Glavina del Rio T."/>
            <person name="Dalin E."/>
            <person name="Tice H."/>
            <person name="Pitluck S."/>
            <person name="Chertkov O."/>
            <person name="Brettin T."/>
            <person name="Bruce D."/>
            <person name="Han C."/>
            <person name="Tapia R."/>
            <person name="Gilna P."/>
            <person name="Schmutz J."/>
            <person name="Larimer F."/>
            <person name="Land M."/>
            <person name="Hauser L."/>
            <person name="Kyrpides N."/>
            <person name="Kim E."/>
            <person name="Stahl D."/>
            <person name="Richardson P."/>
        </authorList>
    </citation>
    <scope>NUCLEOTIDE SEQUENCE [LARGE SCALE GENOMIC DNA]</scope>
    <source>
        <strain>EF01-2</strain>
    </source>
</reference>
<organism>
    <name type="scientific">Verminephrobacter eiseniae (strain EF01-2)</name>
    <dbReference type="NCBI Taxonomy" id="391735"/>
    <lineage>
        <taxon>Bacteria</taxon>
        <taxon>Pseudomonadati</taxon>
        <taxon>Pseudomonadota</taxon>
        <taxon>Betaproteobacteria</taxon>
        <taxon>Burkholderiales</taxon>
        <taxon>Comamonadaceae</taxon>
        <taxon>Verminephrobacter</taxon>
    </lineage>
</organism>
<accession>A1WPR5</accession>
<keyword id="KW-0963">Cytoplasm</keyword>
<keyword id="KW-0342">GTP-binding</keyword>
<keyword id="KW-0378">Hydrolase</keyword>
<keyword id="KW-0460">Magnesium</keyword>
<keyword id="KW-0479">Metal-binding</keyword>
<keyword id="KW-0547">Nucleotide-binding</keyword>
<keyword id="KW-1185">Reference proteome</keyword>
<gene>
    <name evidence="1" type="primary">obg</name>
    <name type="ordered locus">Veis_3915</name>
</gene>
<name>OBG_VEREI</name>
<protein>
    <recommendedName>
        <fullName evidence="1">GTPase Obg</fullName>
        <ecNumber evidence="1">3.6.5.-</ecNumber>
    </recommendedName>
    <alternativeName>
        <fullName evidence="1">GTP-binding protein Obg</fullName>
    </alternativeName>
</protein>
<evidence type="ECO:0000255" key="1">
    <source>
        <dbReference type="HAMAP-Rule" id="MF_01454"/>
    </source>
</evidence>
<evidence type="ECO:0000255" key="2">
    <source>
        <dbReference type="PROSITE-ProRule" id="PRU01231"/>
    </source>
</evidence>
<evidence type="ECO:0000256" key="3">
    <source>
        <dbReference type="SAM" id="MobiDB-lite"/>
    </source>
</evidence>